<keyword id="KW-0217">Developmental protein</keyword>
<keyword id="KW-0238">DNA-binding</keyword>
<keyword id="KW-0539">Nucleus</keyword>
<keyword id="KW-1185">Reference proteome</keyword>
<keyword id="KW-0804">Transcription</keyword>
<keyword id="KW-0805">Transcription regulation</keyword>
<feature type="chain" id="PRO_0000184464" description="T-box-containing protein TBX6L">
    <location>
        <begin position="1"/>
        <end position="361" status="greater than"/>
    </location>
</feature>
<feature type="DNA-binding region" description="T-box" evidence="1">
    <location>
        <begin position="36"/>
        <end position="209"/>
    </location>
</feature>
<feature type="region of interest" description="Disordered" evidence="2">
    <location>
        <begin position="203"/>
        <end position="259"/>
    </location>
</feature>
<feature type="region of interest" description="Disordered" evidence="2">
    <location>
        <begin position="280"/>
        <end position="323"/>
    </location>
</feature>
<feature type="compositionally biased region" description="Basic and acidic residues" evidence="2">
    <location>
        <begin position="206"/>
        <end position="220"/>
    </location>
</feature>
<feature type="compositionally biased region" description="Basic and acidic residues" evidence="2">
    <location>
        <begin position="234"/>
        <end position="259"/>
    </location>
</feature>
<feature type="compositionally biased region" description="Low complexity" evidence="2">
    <location>
        <begin position="280"/>
        <end position="290"/>
    </location>
</feature>
<feature type="non-terminal residue">
    <location>
        <position position="361"/>
    </location>
</feature>
<name>TBX6L_CHICK</name>
<proteinExistence type="evidence at transcript level"/>
<dbReference type="EMBL" id="U67088">
    <property type="protein sequence ID" value="AAC60073.1"/>
    <property type="molecule type" value="mRNA"/>
</dbReference>
<dbReference type="SMR" id="P79779"/>
<dbReference type="FunCoup" id="P79779">
    <property type="interactions" value="1"/>
</dbReference>
<dbReference type="STRING" id="9031.ENSGALP00000010286"/>
<dbReference type="PaxDb" id="9031-ENSGALP00000010286"/>
<dbReference type="VEuPathDB" id="HostDB:geneid_395792"/>
<dbReference type="eggNOG" id="KOG3585">
    <property type="taxonomic scope" value="Eukaryota"/>
</dbReference>
<dbReference type="InParanoid" id="P79779"/>
<dbReference type="Proteomes" id="UP000000539">
    <property type="component" value="Unassembled WGS sequence"/>
</dbReference>
<dbReference type="GO" id="GO:0000785">
    <property type="term" value="C:chromatin"/>
    <property type="evidence" value="ECO:0000318"/>
    <property type="project" value="GO_Central"/>
</dbReference>
<dbReference type="GO" id="GO:0005634">
    <property type="term" value="C:nucleus"/>
    <property type="evidence" value="ECO:0000318"/>
    <property type="project" value="GO_Central"/>
</dbReference>
<dbReference type="GO" id="GO:0000981">
    <property type="term" value="F:DNA-binding transcription factor activity, RNA polymerase II-specific"/>
    <property type="evidence" value="ECO:0000318"/>
    <property type="project" value="GO_Central"/>
</dbReference>
<dbReference type="GO" id="GO:0000978">
    <property type="term" value="F:RNA polymerase II cis-regulatory region sequence-specific DNA binding"/>
    <property type="evidence" value="ECO:0000318"/>
    <property type="project" value="GO_Central"/>
</dbReference>
<dbReference type="GO" id="GO:0001708">
    <property type="term" value="P:cell fate specification"/>
    <property type="evidence" value="ECO:0000318"/>
    <property type="project" value="GO_Central"/>
</dbReference>
<dbReference type="GO" id="GO:0045893">
    <property type="term" value="P:positive regulation of DNA-templated transcription"/>
    <property type="evidence" value="ECO:0007669"/>
    <property type="project" value="InterPro"/>
</dbReference>
<dbReference type="GO" id="GO:0006357">
    <property type="term" value="P:regulation of transcription by RNA polymerase II"/>
    <property type="evidence" value="ECO:0000318"/>
    <property type="project" value="GO_Central"/>
</dbReference>
<dbReference type="CDD" id="cd20197">
    <property type="entry name" value="T-box_VegT-like"/>
    <property type="match status" value="1"/>
</dbReference>
<dbReference type="FunFam" id="2.60.40.820:FF:000007">
    <property type="entry name" value="T-box transcription factor"/>
    <property type="match status" value="1"/>
</dbReference>
<dbReference type="Gene3D" id="2.60.40.820">
    <property type="entry name" value="Transcription factor, T-box"/>
    <property type="match status" value="1"/>
</dbReference>
<dbReference type="InterPro" id="IPR008967">
    <property type="entry name" value="p53-like_TF_DNA-bd_sf"/>
</dbReference>
<dbReference type="InterPro" id="IPR046360">
    <property type="entry name" value="T-box_DNA-bd"/>
</dbReference>
<dbReference type="InterPro" id="IPR036960">
    <property type="entry name" value="T-box_sf"/>
</dbReference>
<dbReference type="InterPro" id="IPR001699">
    <property type="entry name" value="TF_T-box"/>
</dbReference>
<dbReference type="InterPro" id="IPR018186">
    <property type="entry name" value="TF_T-box_CS"/>
</dbReference>
<dbReference type="PANTHER" id="PTHR11267:SF200">
    <property type="entry name" value="MGA, MAX DIMERIZATION PROTEIN"/>
    <property type="match status" value="1"/>
</dbReference>
<dbReference type="PANTHER" id="PTHR11267">
    <property type="entry name" value="T-BOX PROTEIN-RELATED"/>
    <property type="match status" value="1"/>
</dbReference>
<dbReference type="Pfam" id="PF00907">
    <property type="entry name" value="T-box"/>
    <property type="match status" value="1"/>
</dbReference>
<dbReference type="PRINTS" id="PR00937">
    <property type="entry name" value="TBOX"/>
</dbReference>
<dbReference type="SMART" id="SM00425">
    <property type="entry name" value="TBOX"/>
    <property type="match status" value="1"/>
</dbReference>
<dbReference type="SUPFAM" id="SSF49417">
    <property type="entry name" value="p53-like transcription factors"/>
    <property type="match status" value="1"/>
</dbReference>
<dbReference type="PROSITE" id="PS01283">
    <property type="entry name" value="TBOX_1"/>
    <property type="match status" value="1"/>
</dbReference>
<dbReference type="PROSITE" id="PS01264">
    <property type="entry name" value="TBOX_2"/>
    <property type="match status" value="1"/>
</dbReference>
<dbReference type="PROSITE" id="PS50252">
    <property type="entry name" value="TBOX_3"/>
    <property type="match status" value="1"/>
</dbReference>
<protein>
    <recommendedName>
        <fullName>T-box-containing protein TBX6L</fullName>
    </recommendedName>
</protein>
<evidence type="ECO:0000255" key="1">
    <source>
        <dbReference type="PROSITE-ProRule" id="PRU00201"/>
    </source>
</evidence>
<evidence type="ECO:0000256" key="2">
    <source>
        <dbReference type="SAM" id="MobiDB-lite"/>
    </source>
</evidence>
<gene>
    <name type="primary">TBX6L</name>
</gene>
<comment type="function">
    <text>May be involved in regulating somitogenesis.</text>
</comment>
<comment type="subcellular location">
    <subcellularLocation>
        <location evidence="1">Nucleus</location>
    </subcellularLocation>
</comment>
<comment type="developmental stage">
    <text>First detected in stage X-XI blastoderms in the posterior epiblast. At stage 4, detected in the ectoderm around the primitive streak and in later stages, expressed exclusively within the mesoderm of the segmental plate. Expression continues here beyond trunk and tail bud formation and disappears by stage 26-28.</text>
</comment>
<comment type="induction">
    <text>By FGF-4, activin and retinoic acid.</text>
</comment>
<sequence>MQVLPDIKAPCDALASPSLEPYPQSSITVTLEDMGLWMKFHQIGTEMIITKSGRRMFPQCKIKVSGLIPYAKYLMLVDFVPVDNFRYKWNKDQWEVAGKAEPQLPCRTYVHPDSPAPGSHWMKEPVSFQKLKLTNNTLDQHGHIILHSMHRYKPRFHIVQADDLFSVRWSIFQVFSFPETVFTSVTAYQNEQITKLKIDNNPFAKGFREHGKNTRREGRAKSQKPSPAKGQKRKLPEEKESGAEERDFEKDENVDVKEESNPIVVSSGYPFWISEQNSSHAFPAASPAPAEQREGPAREQQVPTPSYQTYRFHEAGDSQQLPSRDVAALNDFRGRCHPLDLATVPEHDSKQLPEGFTNLPP</sequence>
<reference key="1">
    <citation type="journal article" date="1997" name="Development">
        <title>Two novel chick T-box genes related to mouse Brachyury are expressed in different, non-overlapping mesodermal domains during gastrulation.</title>
        <authorList>
            <person name="Knezevic V."/>
            <person name="de Santo R."/>
            <person name="Mackem S."/>
        </authorList>
    </citation>
    <scope>NUCLEOTIDE SEQUENCE [MRNA]</scope>
    <source>
        <strain>White leghorn</strain>
        <tissue>Embryo</tissue>
    </source>
</reference>
<organism>
    <name type="scientific">Gallus gallus</name>
    <name type="common">Chicken</name>
    <dbReference type="NCBI Taxonomy" id="9031"/>
    <lineage>
        <taxon>Eukaryota</taxon>
        <taxon>Metazoa</taxon>
        <taxon>Chordata</taxon>
        <taxon>Craniata</taxon>
        <taxon>Vertebrata</taxon>
        <taxon>Euteleostomi</taxon>
        <taxon>Archelosauria</taxon>
        <taxon>Archosauria</taxon>
        <taxon>Dinosauria</taxon>
        <taxon>Saurischia</taxon>
        <taxon>Theropoda</taxon>
        <taxon>Coelurosauria</taxon>
        <taxon>Aves</taxon>
        <taxon>Neognathae</taxon>
        <taxon>Galloanserae</taxon>
        <taxon>Galliformes</taxon>
        <taxon>Phasianidae</taxon>
        <taxon>Phasianinae</taxon>
        <taxon>Gallus</taxon>
    </lineage>
</organism>
<accession>P79779</accession>